<proteinExistence type="evidence at transcript level"/>
<accession>P08147</accession>
<reference key="1">
    <citation type="journal article" date="1983" name="Nucleic Acids Res.">
        <title>Sequence homologies in the protamine gene family of rainbow trout.</title>
        <authorList>
            <person name="Aiken J.M."/>
            <person name="McKenzie D."/>
            <person name="Zhao H.-Z."/>
            <person name="States J.C."/>
            <person name="Dixon G.H."/>
        </authorList>
    </citation>
    <scope>NUCLEOTIDE SEQUENCE [GENOMIC DNA]</scope>
</reference>
<name>PRT17_ONCMY</name>
<organism>
    <name type="scientific">Oncorhynchus mykiss</name>
    <name type="common">Rainbow trout</name>
    <name type="synonym">Salmo gairdneri</name>
    <dbReference type="NCBI Taxonomy" id="8022"/>
    <lineage>
        <taxon>Eukaryota</taxon>
        <taxon>Metazoa</taxon>
        <taxon>Chordata</taxon>
        <taxon>Craniata</taxon>
        <taxon>Vertebrata</taxon>
        <taxon>Euteleostomi</taxon>
        <taxon>Actinopterygii</taxon>
        <taxon>Neopterygii</taxon>
        <taxon>Teleostei</taxon>
        <taxon>Protacanthopterygii</taxon>
        <taxon>Salmoniformes</taxon>
        <taxon>Salmonidae</taxon>
        <taxon>Salmoninae</taxon>
        <taxon>Oncorhynchus</taxon>
    </lineage>
</organism>
<protein>
    <recommendedName>
        <fullName>Protamine TP17</fullName>
    </recommendedName>
</protein>
<comment type="function">
    <text>Protamines substitute for histones in the chromatin of sperm during the haploid phase of spermatogenesis. They compact sperm DNA into a highly condensed, stable and inactive complex.</text>
</comment>
<comment type="subcellular location">
    <subcellularLocation>
        <location>Nucleus</location>
    </subcellularLocation>
    <subcellularLocation>
        <location>Chromosome</location>
    </subcellularLocation>
</comment>
<comment type="tissue specificity">
    <text>Testis.</text>
</comment>
<sequence length="33" mass="4480">MPRRRRSSSRPVRRRRRPRVSRRRRRRGRRRRR</sequence>
<dbReference type="EMBL" id="X01598">
    <property type="protein sequence ID" value="CAA25751.1"/>
    <property type="molecule type" value="Genomic_DNA"/>
</dbReference>
<dbReference type="PIR" id="T01070">
    <property type="entry name" value="T01070"/>
</dbReference>
<dbReference type="Proteomes" id="UP000694395">
    <property type="component" value="Unplaced"/>
</dbReference>
<dbReference type="GO" id="GO:0000786">
    <property type="term" value="C:nucleosome"/>
    <property type="evidence" value="ECO:0007669"/>
    <property type="project" value="UniProtKB-KW"/>
</dbReference>
<dbReference type="GO" id="GO:0005634">
    <property type="term" value="C:nucleus"/>
    <property type="evidence" value="ECO:0007669"/>
    <property type="project" value="UniProtKB-SubCell"/>
</dbReference>
<dbReference type="GO" id="GO:0003677">
    <property type="term" value="F:DNA binding"/>
    <property type="evidence" value="ECO:0007669"/>
    <property type="project" value="UniProtKB-KW"/>
</dbReference>
<dbReference type="GO" id="GO:0030154">
    <property type="term" value="P:cell differentiation"/>
    <property type="evidence" value="ECO:0007669"/>
    <property type="project" value="UniProtKB-KW"/>
</dbReference>
<dbReference type="GO" id="GO:0030261">
    <property type="term" value="P:chromosome condensation"/>
    <property type="evidence" value="ECO:0007669"/>
    <property type="project" value="UniProtKB-KW"/>
</dbReference>
<dbReference type="GO" id="GO:0007283">
    <property type="term" value="P:spermatogenesis"/>
    <property type="evidence" value="ECO:0007669"/>
    <property type="project" value="UniProtKB-KW"/>
</dbReference>
<feature type="initiator methionine" description="Removed">
    <location>
        <position position="1"/>
    </location>
</feature>
<feature type="peptide" id="PRO_0000044842" description="Protamine TP17">
    <location>
        <begin position="2"/>
        <end position="33"/>
    </location>
</feature>
<feature type="region of interest" description="Disordered" evidence="1">
    <location>
        <begin position="1"/>
        <end position="33"/>
    </location>
</feature>
<keyword id="KW-0158">Chromosome</keyword>
<keyword id="KW-0217">Developmental protein</keyword>
<keyword id="KW-0221">Differentiation</keyword>
<keyword id="KW-0226">DNA condensation</keyword>
<keyword id="KW-0238">DNA-binding</keyword>
<keyword id="KW-0544">Nucleosome core</keyword>
<keyword id="KW-0539">Nucleus</keyword>
<keyword id="KW-0744">Spermatogenesis</keyword>
<evidence type="ECO:0000256" key="1">
    <source>
        <dbReference type="SAM" id="MobiDB-lite"/>
    </source>
</evidence>